<sequence length="115" mass="13481">MVRVKRGNVARKRRKKILKLASGFKGAHSKLFRVANQQVNKSLRYSYVGRKLKKRRFRRLWILRLNAASREEGLNYSKLVNSLKLLRIQLNRKSLSQLAMIDNDAFKRLVASSRV</sequence>
<feature type="chain" id="PRO_0000177285" description="Large ribosomal subunit protein bL20c">
    <location>
        <begin position="1"/>
        <end position="115"/>
    </location>
</feature>
<organism>
    <name type="scientific">Cyanidium caldarium</name>
    <name type="common">Red alga</name>
    <dbReference type="NCBI Taxonomy" id="2771"/>
    <lineage>
        <taxon>Eukaryota</taxon>
        <taxon>Rhodophyta</taxon>
        <taxon>Bangiophyceae</taxon>
        <taxon>Cyanidiales</taxon>
        <taxon>Cyanidiaceae</taxon>
        <taxon>Cyanidium</taxon>
    </lineage>
</organism>
<name>RK20_CYACA</name>
<gene>
    <name type="primary">rpl20</name>
</gene>
<accession>Q9TLS0</accession>
<evidence type="ECO:0000250" key="1"/>
<evidence type="ECO:0000305" key="2"/>
<dbReference type="EMBL" id="AF022186">
    <property type="protein sequence ID" value="AAF12895.1"/>
    <property type="molecule type" value="Genomic_DNA"/>
</dbReference>
<dbReference type="RefSeq" id="NP_045199.1">
    <property type="nucleotide sequence ID" value="NC_001840.1"/>
</dbReference>
<dbReference type="SMR" id="Q9TLS0"/>
<dbReference type="GeneID" id="800149"/>
<dbReference type="GO" id="GO:0009507">
    <property type="term" value="C:chloroplast"/>
    <property type="evidence" value="ECO:0007669"/>
    <property type="project" value="UniProtKB-SubCell"/>
</dbReference>
<dbReference type="GO" id="GO:1990904">
    <property type="term" value="C:ribonucleoprotein complex"/>
    <property type="evidence" value="ECO:0007669"/>
    <property type="project" value="UniProtKB-KW"/>
</dbReference>
<dbReference type="GO" id="GO:0005840">
    <property type="term" value="C:ribosome"/>
    <property type="evidence" value="ECO:0007669"/>
    <property type="project" value="UniProtKB-KW"/>
</dbReference>
<dbReference type="GO" id="GO:0019843">
    <property type="term" value="F:rRNA binding"/>
    <property type="evidence" value="ECO:0007669"/>
    <property type="project" value="UniProtKB-UniRule"/>
</dbReference>
<dbReference type="GO" id="GO:0003735">
    <property type="term" value="F:structural constituent of ribosome"/>
    <property type="evidence" value="ECO:0007669"/>
    <property type="project" value="InterPro"/>
</dbReference>
<dbReference type="GO" id="GO:0000027">
    <property type="term" value="P:ribosomal large subunit assembly"/>
    <property type="evidence" value="ECO:0007669"/>
    <property type="project" value="UniProtKB-UniRule"/>
</dbReference>
<dbReference type="GO" id="GO:0006412">
    <property type="term" value="P:translation"/>
    <property type="evidence" value="ECO:0007669"/>
    <property type="project" value="InterPro"/>
</dbReference>
<dbReference type="CDD" id="cd07026">
    <property type="entry name" value="Ribosomal_L20"/>
    <property type="match status" value="1"/>
</dbReference>
<dbReference type="FunFam" id="1.10.1900.20:FF:000001">
    <property type="entry name" value="50S ribosomal protein L20"/>
    <property type="match status" value="1"/>
</dbReference>
<dbReference type="Gene3D" id="6.10.160.10">
    <property type="match status" value="1"/>
</dbReference>
<dbReference type="Gene3D" id="1.10.1900.20">
    <property type="entry name" value="Ribosomal protein L20"/>
    <property type="match status" value="1"/>
</dbReference>
<dbReference type="HAMAP" id="MF_00382">
    <property type="entry name" value="Ribosomal_bL20"/>
    <property type="match status" value="1"/>
</dbReference>
<dbReference type="InterPro" id="IPR005813">
    <property type="entry name" value="Ribosomal_bL20"/>
</dbReference>
<dbReference type="InterPro" id="IPR049946">
    <property type="entry name" value="RIBOSOMAL_L20_CS"/>
</dbReference>
<dbReference type="InterPro" id="IPR035566">
    <property type="entry name" value="Ribosomal_protein_bL20_C"/>
</dbReference>
<dbReference type="NCBIfam" id="TIGR01032">
    <property type="entry name" value="rplT_bact"/>
    <property type="match status" value="1"/>
</dbReference>
<dbReference type="PANTHER" id="PTHR10986">
    <property type="entry name" value="39S RIBOSOMAL PROTEIN L20"/>
    <property type="match status" value="1"/>
</dbReference>
<dbReference type="Pfam" id="PF00453">
    <property type="entry name" value="Ribosomal_L20"/>
    <property type="match status" value="1"/>
</dbReference>
<dbReference type="PRINTS" id="PR00062">
    <property type="entry name" value="RIBOSOMALL20"/>
</dbReference>
<dbReference type="SUPFAM" id="SSF74731">
    <property type="entry name" value="Ribosomal protein L20"/>
    <property type="match status" value="1"/>
</dbReference>
<dbReference type="PROSITE" id="PS00937">
    <property type="entry name" value="RIBOSOMAL_L20"/>
    <property type="match status" value="1"/>
</dbReference>
<comment type="function">
    <text evidence="1">Binds directly to 23S ribosomal RNA and is necessary for the in vitro assembly process of the 50S ribosomal subunit. It is not involved in the protein synthesizing functions of that subunit (By similarity).</text>
</comment>
<comment type="subcellular location">
    <subcellularLocation>
        <location>Plastid</location>
        <location>Chloroplast</location>
    </subcellularLocation>
</comment>
<comment type="similarity">
    <text evidence="2">Belongs to the bacterial ribosomal protein bL20 family.</text>
</comment>
<protein>
    <recommendedName>
        <fullName evidence="2">Large ribosomal subunit protein bL20c</fullName>
    </recommendedName>
    <alternativeName>
        <fullName>50S ribosomal protein L20, chloroplastic</fullName>
    </alternativeName>
</protein>
<proteinExistence type="inferred from homology"/>
<keyword id="KW-0150">Chloroplast</keyword>
<keyword id="KW-0934">Plastid</keyword>
<keyword id="KW-0687">Ribonucleoprotein</keyword>
<keyword id="KW-0689">Ribosomal protein</keyword>
<keyword id="KW-0694">RNA-binding</keyword>
<keyword id="KW-0699">rRNA-binding</keyword>
<reference key="1">
    <citation type="journal article" date="2000" name="J. Mol. Evol.">
        <title>The structure and gene repertoire of an ancient red algal plastid genome.</title>
        <authorList>
            <person name="Gloeckner G."/>
            <person name="Rosenthal A."/>
            <person name="Valentin K.-U."/>
        </authorList>
    </citation>
    <scope>NUCLEOTIDE SEQUENCE [LARGE SCALE GENOMIC DNA]</scope>
    <source>
        <strain>RK-1</strain>
    </source>
</reference>
<geneLocation type="chloroplast"/>